<dbReference type="EMBL" id="X52375">
    <property type="protein sequence ID" value="CAA36602.1"/>
    <property type="molecule type" value="mRNA"/>
</dbReference>
<dbReference type="PIR" id="A38524">
    <property type="entry name" value="HMWJBV"/>
</dbReference>
<dbReference type="SMR" id="P31964"/>
<dbReference type="GlyCosmos" id="P31964">
    <property type="glycosylation" value="3 sites, No reported glycans"/>
</dbReference>
<dbReference type="Proteomes" id="UP000006571">
    <property type="component" value="Genome"/>
</dbReference>
<dbReference type="GO" id="GO:0020002">
    <property type="term" value="C:host cell plasma membrane"/>
    <property type="evidence" value="ECO:0007669"/>
    <property type="project" value="UniProtKB-SubCell"/>
</dbReference>
<dbReference type="GO" id="GO:0016020">
    <property type="term" value="C:membrane"/>
    <property type="evidence" value="ECO:0007669"/>
    <property type="project" value="UniProtKB-KW"/>
</dbReference>
<dbReference type="GO" id="GO:0019031">
    <property type="term" value="C:viral envelope"/>
    <property type="evidence" value="ECO:0007669"/>
    <property type="project" value="UniProtKB-KW"/>
</dbReference>
<dbReference type="GO" id="GO:0055036">
    <property type="term" value="C:virion membrane"/>
    <property type="evidence" value="ECO:0007669"/>
    <property type="project" value="UniProtKB-SubCell"/>
</dbReference>
<dbReference type="GO" id="GO:0046789">
    <property type="term" value="F:host cell surface receptor binding"/>
    <property type="evidence" value="ECO:0007669"/>
    <property type="project" value="InterPro"/>
</dbReference>
<dbReference type="GO" id="GO:0016788">
    <property type="term" value="F:hydrolase activity, acting on ester bonds"/>
    <property type="evidence" value="ECO:0007669"/>
    <property type="project" value="InterPro"/>
</dbReference>
<dbReference type="GO" id="GO:0019064">
    <property type="term" value="P:fusion of virus membrane with host plasma membrane"/>
    <property type="evidence" value="ECO:0007669"/>
    <property type="project" value="InterPro"/>
</dbReference>
<dbReference type="InterPro" id="IPR007142">
    <property type="entry name" value="Hemagglutn-estrase_core"/>
</dbReference>
<dbReference type="Pfam" id="PF03996">
    <property type="entry name" value="Hema_esterase"/>
    <property type="match status" value="1"/>
</dbReference>
<dbReference type="SUPFAM" id="SSF52266">
    <property type="entry name" value="SGNH hydrolase"/>
    <property type="match status" value="1"/>
</dbReference>
<evidence type="ECO:0000250" key="1"/>
<evidence type="ECO:0000255" key="2"/>
<evidence type="ECO:0000305" key="3"/>
<keyword id="KW-1015">Disulfide bond</keyword>
<keyword id="KW-0325">Glycoprotein</keyword>
<keyword id="KW-0348">Hemagglutinin</keyword>
<keyword id="KW-1032">Host cell membrane</keyword>
<keyword id="KW-1043">Host membrane</keyword>
<keyword id="KW-0472">Membrane</keyword>
<keyword id="KW-0812">Transmembrane</keyword>
<keyword id="KW-1133">Transmembrane helix</keyword>
<keyword id="KW-0261">Viral envelope protein</keyword>
<keyword id="KW-0946">Virion</keyword>
<organism>
    <name type="scientific">Berne virus</name>
    <name type="common">BEV</name>
    <dbReference type="NCBI Taxonomy" id="11156"/>
    <lineage>
        <taxon>Viruses</taxon>
        <taxon>Riboviria</taxon>
        <taxon>Orthornavirae</taxon>
        <taxon>Pisuviricota</taxon>
        <taxon>Pisoniviricetes</taxon>
        <taxon>Nidovirales</taxon>
        <taxon>Tornidovirineae</taxon>
        <taxon>Tobaniviridae</taxon>
        <taxon>Torovirinae</taxon>
        <taxon>Torovirus</taxon>
        <taxon>Renitovirus</taxon>
        <taxon>Equine torovirus</taxon>
    </lineage>
</organism>
<accession>P31964</accession>
<gene>
    <name type="primary">HE</name>
</gene>
<name>HEMA_BEV</name>
<feature type="chain" id="PRO_0000106127" description="Truncated non-functional hemagglutinin-esterase homolog">
    <location>
        <begin position="1"/>
        <end position="142"/>
    </location>
</feature>
<feature type="topological domain" description="Virion surface" evidence="2">
    <location>
        <begin position="1"/>
        <end position="117"/>
    </location>
</feature>
<feature type="transmembrane region" description="Helical" evidence="2">
    <location>
        <begin position="118"/>
        <end position="138"/>
    </location>
</feature>
<feature type="topological domain" description="Intravirion" evidence="2">
    <location>
        <begin position="139"/>
        <end position="142"/>
    </location>
</feature>
<feature type="glycosylation site" description="N-linked (GlcNAc...) asparagine; by host" evidence="2">
    <location>
        <position position="2"/>
    </location>
</feature>
<feature type="glycosylation site" description="N-linked (GlcNAc...) asparagine; by host" evidence="2">
    <location>
        <position position="46"/>
    </location>
</feature>
<feature type="glycosylation site" description="N-linked (GlcNAc...) asparagine; by host" evidence="2">
    <location>
        <position position="67"/>
    </location>
</feature>
<feature type="disulfide bond" evidence="1">
    <location>
        <begin position="28"/>
        <end position="33"/>
    </location>
</feature>
<feature type="disulfide bond" evidence="1">
    <location>
        <begin position="70"/>
        <end position="95"/>
    </location>
</feature>
<organismHost>
    <name type="scientific">Equus caballus</name>
    <name type="common">Horse</name>
    <dbReference type="NCBI Taxonomy" id="9796"/>
</organismHost>
<proteinExistence type="evidence at transcript level"/>
<sequence>MNFTVPVQAIQSIWSVGKESDDAIAEACKPPFCIYFSKKTPYTVTNGSNADHGDDEVRQMMRGLLYNSSCISAQGHTPLALYSTAMLYPPMYGSCPQYVKLFDGSGSESVDVISSSYFVATWVLLVVVIILVFIIISFCISN</sequence>
<comment type="subunit">
    <text evidence="1">Homodimer.</text>
</comment>
<comment type="subcellular location">
    <subcellularLocation>
        <location evidence="3">Virion membrane</location>
        <topology evidence="3">Single-pass type I membrane protein</topology>
    </subcellularLocation>
    <subcellularLocation>
        <location evidence="3">Host cell membrane</location>
        <topology evidence="3">Single-pass type I membrane protein</topology>
    </subcellularLocation>
    <text evidence="1">In infected cells becomes incorporated into the envelope of virions during virus assembly at the endoplasmic reticulum and cis Golgi. However, some may escape incorporation into virions and subsequently migrate to the cell surface (By similarity).</text>
</comment>
<comment type="PTM">
    <text evidence="1">N-glycosylated.</text>
</comment>
<comment type="miscellaneous">
    <text>The truncated hemagglutinin-esterase of Berne virus is probably non-functional, since part of its active site is missing.</text>
</comment>
<comment type="similarity">
    <text evidence="3">Belongs to the influenza type C/coronaviruses hemagglutinin-esterase family.</text>
</comment>
<protein>
    <recommendedName>
        <fullName>Truncated non-functional hemagglutinin-esterase homolog</fullName>
    </recommendedName>
</protein>
<reference key="1">
    <citation type="journal article" date="1991" name="Virology">
        <title>Comparison of the genome organization of toro- and coronaviruses: evidence for two nonhomologous RNA recombination events during Berne virus evolution.</title>
        <authorList>
            <person name="Snijder E.J."/>
            <person name="den Boon J.A."/>
            <person name="Horzinek M.C."/>
            <person name="Spaan W.J.M."/>
        </authorList>
    </citation>
    <scope>NUCLEOTIDE SEQUENCE [MRNA]</scope>
    <source>
        <strain>Isolate P138/72</strain>
    </source>
</reference>